<name>RNA14_ASPFU</name>
<dbReference type="EMBL" id="AAHF01000002">
    <property type="protein sequence ID" value="EAL92479.1"/>
    <property type="molecule type" value="Genomic_DNA"/>
</dbReference>
<dbReference type="RefSeq" id="XP_754517.1">
    <property type="nucleotide sequence ID" value="XM_749424.1"/>
</dbReference>
<dbReference type="SMR" id="Q4WXX4"/>
<dbReference type="FunCoup" id="Q4WXX4">
    <property type="interactions" value="1188"/>
</dbReference>
<dbReference type="STRING" id="330879.Q4WXX4"/>
<dbReference type="EnsemblFungi" id="EAL92479">
    <property type="protein sequence ID" value="EAL92479"/>
    <property type="gene ID" value="AFUA_3G11020"/>
</dbReference>
<dbReference type="GeneID" id="3511720"/>
<dbReference type="KEGG" id="afm:AFUA_3G11020"/>
<dbReference type="VEuPathDB" id="FungiDB:Afu3g11020"/>
<dbReference type="eggNOG" id="KOG1914">
    <property type="taxonomic scope" value="Eukaryota"/>
</dbReference>
<dbReference type="HOGENOM" id="CLU_007630_1_1_1"/>
<dbReference type="InParanoid" id="Q4WXX4"/>
<dbReference type="OMA" id="VQLWSVY"/>
<dbReference type="OrthoDB" id="26282at2759"/>
<dbReference type="Proteomes" id="UP000002530">
    <property type="component" value="Chromosome 3"/>
</dbReference>
<dbReference type="GO" id="GO:0005737">
    <property type="term" value="C:cytoplasm"/>
    <property type="evidence" value="ECO:0007669"/>
    <property type="project" value="UniProtKB-SubCell"/>
</dbReference>
<dbReference type="GO" id="GO:0005634">
    <property type="term" value="C:nucleus"/>
    <property type="evidence" value="ECO:0000318"/>
    <property type="project" value="GO_Central"/>
</dbReference>
<dbReference type="GO" id="GO:0003729">
    <property type="term" value="F:mRNA binding"/>
    <property type="evidence" value="ECO:0000318"/>
    <property type="project" value="GO_Central"/>
</dbReference>
<dbReference type="GO" id="GO:0031124">
    <property type="term" value="P:mRNA 3'-end processing"/>
    <property type="evidence" value="ECO:0007669"/>
    <property type="project" value="InterPro"/>
</dbReference>
<dbReference type="GO" id="GO:0031123">
    <property type="term" value="P:RNA 3'-end processing"/>
    <property type="evidence" value="ECO:0000318"/>
    <property type="project" value="GO_Central"/>
</dbReference>
<dbReference type="FunFam" id="1.25.40.1040:FF:000006">
    <property type="entry name" value="CFIA complex component Rna14, putative"/>
    <property type="match status" value="1"/>
</dbReference>
<dbReference type="Gene3D" id="1.25.40.1040">
    <property type="match status" value="1"/>
</dbReference>
<dbReference type="InterPro" id="IPR003107">
    <property type="entry name" value="HAT"/>
</dbReference>
<dbReference type="InterPro" id="IPR045243">
    <property type="entry name" value="Rna14-like"/>
</dbReference>
<dbReference type="InterPro" id="IPR008847">
    <property type="entry name" value="Suf"/>
</dbReference>
<dbReference type="InterPro" id="IPR011990">
    <property type="entry name" value="TPR-like_helical_dom_sf"/>
</dbReference>
<dbReference type="PANTHER" id="PTHR19980:SF0">
    <property type="entry name" value="CLEAVAGE STIMULATION FACTOR SUBUNIT 3"/>
    <property type="match status" value="1"/>
</dbReference>
<dbReference type="PANTHER" id="PTHR19980">
    <property type="entry name" value="RNA CLEAVAGE STIMULATION FACTOR"/>
    <property type="match status" value="1"/>
</dbReference>
<dbReference type="Pfam" id="PF05843">
    <property type="entry name" value="Suf"/>
    <property type="match status" value="1"/>
</dbReference>
<dbReference type="SMART" id="SM00386">
    <property type="entry name" value="HAT"/>
    <property type="match status" value="6"/>
</dbReference>
<dbReference type="SUPFAM" id="SSF48452">
    <property type="entry name" value="TPR-like"/>
    <property type="match status" value="2"/>
</dbReference>
<dbReference type="PROSITE" id="PS50293">
    <property type="entry name" value="TPR_REGION"/>
    <property type="match status" value="1"/>
</dbReference>
<proteinExistence type="inferred from homology"/>
<gene>
    <name type="primary">rna14</name>
    <name type="ORF">AFUA_3G11020</name>
</gene>
<evidence type="ECO:0000250" key="1"/>
<evidence type="ECO:0000256" key="2">
    <source>
        <dbReference type="SAM" id="MobiDB-lite"/>
    </source>
</evidence>
<feature type="chain" id="PRO_0000238518" description="mRNA 3'-end-processing protein rna14">
    <location>
        <begin position="1"/>
        <end position="1029"/>
    </location>
</feature>
<feature type="repeat" description="HAT 1">
    <location>
        <begin position="281"/>
        <end position="313"/>
    </location>
</feature>
<feature type="repeat" description="HAT 2">
    <location>
        <begin position="315"/>
        <end position="346"/>
    </location>
</feature>
<feature type="repeat" description="HAT 3">
    <location>
        <begin position="357"/>
        <end position="392"/>
    </location>
</feature>
<feature type="repeat" description="HAT 4">
    <location>
        <begin position="406"/>
        <end position="439"/>
    </location>
</feature>
<feature type="repeat" description="HAT 5">
    <location>
        <begin position="469"/>
        <end position="509"/>
    </location>
</feature>
<feature type="repeat" description="HAT 6">
    <location>
        <begin position="521"/>
        <end position="553"/>
    </location>
</feature>
<feature type="region of interest" description="Disordered" evidence="2">
    <location>
        <begin position="1"/>
        <end position="177"/>
    </location>
</feature>
<feature type="region of interest" description="Disordered" evidence="2">
    <location>
        <begin position="225"/>
        <end position="251"/>
    </location>
</feature>
<feature type="region of interest" description="Disordered" evidence="2">
    <location>
        <begin position="634"/>
        <end position="664"/>
    </location>
</feature>
<feature type="region of interest" description="Disordered" evidence="2">
    <location>
        <begin position="853"/>
        <end position="951"/>
    </location>
</feature>
<feature type="region of interest" description="Disordered" evidence="2">
    <location>
        <begin position="996"/>
        <end position="1023"/>
    </location>
</feature>
<feature type="compositionally biased region" description="Basic and acidic residues" evidence="2">
    <location>
        <begin position="21"/>
        <end position="32"/>
    </location>
</feature>
<feature type="compositionally biased region" description="Polar residues" evidence="2">
    <location>
        <begin position="43"/>
        <end position="79"/>
    </location>
</feature>
<feature type="compositionally biased region" description="Polar residues" evidence="2">
    <location>
        <begin position="104"/>
        <end position="119"/>
    </location>
</feature>
<feature type="compositionally biased region" description="Acidic residues" evidence="2">
    <location>
        <begin position="127"/>
        <end position="140"/>
    </location>
</feature>
<feature type="compositionally biased region" description="Polar residues" evidence="2">
    <location>
        <begin position="153"/>
        <end position="175"/>
    </location>
</feature>
<feature type="compositionally biased region" description="Low complexity" evidence="2">
    <location>
        <begin position="229"/>
        <end position="243"/>
    </location>
</feature>
<feature type="compositionally biased region" description="Basic and acidic residues" evidence="2">
    <location>
        <begin position="894"/>
        <end position="908"/>
    </location>
</feature>
<feature type="compositionally biased region" description="Polar residues" evidence="2">
    <location>
        <begin position="932"/>
        <end position="949"/>
    </location>
</feature>
<feature type="compositionally biased region" description="Polar residues" evidence="2">
    <location>
        <begin position="1006"/>
        <end position="1023"/>
    </location>
</feature>
<sequence>MAEEDAEKAFFQAQTMNAESVDYKAVEEHGADSSDSDDYDPSKTLQDQYSSSMTDLKQSENVSSSASPEPNPTEQNSVQPDHDPSQPDGASYPSQTPPRDESRTSTMVPTSGTSVQPKTRTIGGFVVEDEDEDDAGDADYEPPAVLGVEDMNTVATNVPQQSVSGNENEASSTPDVSLDDAAQQSASLNNVSHNSYSPAPAVAPKSDVAVAAGQSLYNSHALQSGNVQDSATATPTPDSPSTSKGRLPHDRVGILEDRIQEDPRGDIPAWLELINEHRSRNRFDSARDVFERFLKVFPFAAEQWVAYAKMESELNDLYRLEQIFNRTLLTIPDVQLWSVYLDYVRRRNPLTTDTTGQARRIISSAYELAFQHIGVDKDSGSIWSDYVQFIKSGPGNVGGSGWQDQQKMDLLRKAYQKAICVPTQAVNTLWKEYDQFEMGLNKLTGRKFLQEQSPAYMTARSSYTELQNITRDLIRTTLPRLPPVPGSDGDIEFTQQVDIWKRWIKWEKGDPLVLKEEDPAAFKGRVVYVYKQALMALRFLPEMWFDAAEFCFLNDLESEGNEFLKQGMEANPESCLLAFKRADRLEITSESEQDPIKRGAKVREPYDKLLDALYDLIAKARTREAQDVARLEETFAKMNADNPPAKTDDDDDDQSESKARESVKNAQIDAVRKAHAIQIGILSKTISFAWIALMRAMRRIQGKGKPGETPGSRQVFADARKRGRITSDVYIASALIEYHCYKDPAATKIFERGAKLFPDDENFALEYLKHLIDINDIINARAVFEMTVRKLASNPDNVHKTKPIFAFLHEYESRYGDLVQVINLENRMRELFPEDPTLEQFAHRYSAPTFDPTAVRPIISPSQMRPKAVFPTSEQPMSRHGTPTPRYPGSVTDSPKRPLEDFDDDYNRPRKFVRAESPLKTSQRRQLDQQKRSQLSNVQTGSQFRSQGSPAPLPRDIVHLLSIIPPASAYTAGRFSPEKLVDLIRRIEMPSSISQIPLPQSARGLGTTQTPMQPFSGKASPSLSVRAVY</sequence>
<reference key="1">
    <citation type="journal article" date="2005" name="Nature">
        <title>Genomic sequence of the pathogenic and allergenic filamentous fungus Aspergillus fumigatus.</title>
        <authorList>
            <person name="Nierman W.C."/>
            <person name="Pain A."/>
            <person name="Anderson M.J."/>
            <person name="Wortman J.R."/>
            <person name="Kim H.S."/>
            <person name="Arroyo J."/>
            <person name="Berriman M."/>
            <person name="Abe K."/>
            <person name="Archer D.B."/>
            <person name="Bermejo C."/>
            <person name="Bennett J.W."/>
            <person name="Bowyer P."/>
            <person name="Chen D."/>
            <person name="Collins M."/>
            <person name="Coulsen R."/>
            <person name="Davies R."/>
            <person name="Dyer P.S."/>
            <person name="Farman M.L."/>
            <person name="Fedorova N."/>
            <person name="Fedorova N.D."/>
            <person name="Feldblyum T.V."/>
            <person name="Fischer R."/>
            <person name="Fosker N."/>
            <person name="Fraser A."/>
            <person name="Garcia J.L."/>
            <person name="Garcia M.J."/>
            <person name="Goble A."/>
            <person name="Goldman G.H."/>
            <person name="Gomi K."/>
            <person name="Griffith-Jones S."/>
            <person name="Gwilliam R."/>
            <person name="Haas B.J."/>
            <person name="Haas H."/>
            <person name="Harris D.E."/>
            <person name="Horiuchi H."/>
            <person name="Huang J."/>
            <person name="Humphray S."/>
            <person name="Jimenez J."/>
            <person name="Keller N."/>
            <person name="Khouri H."/>
            <person name="Kitamoto K."/>
            <person name="Kobayashi T."/>
            <person name="Konzack S."/>
            <person name="Kulkarni R."/>
            <person name="Kumagai T."/>
            <person name="Lafton A."/>
            <person name="Latge J.-P."/>
            <person name="Li W."/>
            <person name="Lord A."/>
            <person name="Lu C."/>
            <person name="Majoros W.H."/>
            <person name="May G.S."/>
            <person name="Miller B.L."/>
            <person name="Mohamoud Y."/>
            <person name="Molina M."/>
            <person name="Monod M."/>
            <person name="Mouyna I."/>
            <person name="Mulligan S."/>
            <person name="Murphy L.D."/>
            <person name="O'Neil S."/>
            <person name="Paulsen I."/>
            <person name="Penalva M.A."/>
            <person name="Pertea M."/>
            <person name="Price C."/>
            <person name="Pritchard B.L."/>
            <person name="Quail M.A."/>
            <person name="Rabbinowitsch E."/>
            <person name="Rawlins N."/>
            <person name="Rajandream M.A."/>
            <person name="Reichard U."/>
            <person name="Renauld H."/>
            <person name="Robson G.D."/>
            <person name="Rodriguez de Cordoba S."/>
            <person name="Rodriguez-Pena J.M."/>
            <person name="Ronning C.M."/>
            <person name="Rutter S."/>
            <person name="Salzberg S.L."/>
            <person name="Sanchez M."/>
            <person name="Sanchez-Ferrero J.C."/>
            <person name="Saunders D."/>
            <person name="Seeger K."/>
            <person name="Squares R."/>
            <person name="Squares S."/>
            <person name="Takeuchi M."/>
            <person name="Tekaia F."/>
            <person name="Turner G."/>
            <person name="Vazquez de Aldana C.R."/>
            <person name="Weidman J."/>
            <person name="White O."/>
            <person name="Woodward J.R."/>
            <person name="Yu J.-H."/>
            <person name="Fraser C.M."/>
            <person name="Galagan J.E."/>
            <person name="Asai K."/>
            <person name="Machida M."/>
            <person name="Hall N."/>
            <person name="Barrell B.G."/>
            <person name="Denning D.W."/>
        </authorList>
    </citation>
    <scope>NUCLEOTIDE SEQUENCE [LARGE SCALE GENOMIC DNA]</scope>
    <source>
        <strain>ATCC MYA-4609 / CBS 101355 / FGSC A1100 / Af293</strain>
    </source>
</reference>
<comment type="function">
    <text evidence="1">Component of the cleavage factor IA (CFIA) complex, which is involved in the endonucleolytic cleavage during polyadenylation-dependent pre-mRNA 3'-end formation.</text>
</comment>
<comment type="subcellular location">
    <subcellularLocation>
        <location evidence="1">Nucleus</location>
    </subcellularLocation>
    <subcellularLocation>
        <location evidence="1">Cytoplasm</location>
    </subcellularLocation>
    <text evidence="1">Nucleus and/or cytoplasm.</text>
</comment>
<keyword id="KW-0963">Cytoplasm</keyword>
<keyword id="KW-0507">mRNA processing</keyword>
<keyword id="KW-0539">Nucleus</keyword>
<keyword id="KW-1185">Reference proteome</keyword>
<keyword id="KW-0677">Repeat</keyword>
<accession>Q4WXX4</accession>
<organism>
    <name type="scientific">Aspergillus fumigatus (strain ATCC MYA-4609 / CBS 101355 / FGSC A1100 / Af293)</name>
    <name type="common">Neosartorya fumigata</name>
    <dbReference type="NCBI Taxonomy" id="330879"/>
    <lineage>
        <taxon>Eukaryota</taxon>
        <taxon>Fungi</taxon>
        <taxon>Dikarya</taxon>
        <taxon>Ascomycota</taxon>
        <taxon>Pezizomycotina</taxon>
        <taxon>Eurotiomycetes</taxon>
        <taxon>Eurotiomycetidae</taxon>
        <taxon>Eurotiales</taxon>
        <taxon>Aspergillaceae</taxon>
        <taxon>Aspergillus</taxon>
        <taxon>Aspergillus subgen. Fumigati</taxon>
    </lineage>
</organism>
<protein>
    <recommendedName>
        <fullName>mRNA 3'-end-processing protein rna14</fullName>
    </recommendedName>
</protein>